<feature type="transit peptide" description="Mitochondrion">
    <location>
        <begin position="1"/>
        <end position="30"/>
    </location>
</feature>
<feature type="chain" id="PRO_0000010763" description="Aminomethyltransferase, mitochondrial">
    <location>
        <begin position="31"/>
        <end position="408"/>
    </location>
</feature>
<feature type="binding site" evidence="1">
    <location>
        <position position="235"/>
    </location>
    <ligand>
        <name>substrate</name>
    </ligand>
</feature>
<feature type="binding site" evidence="1">
    <location>
        <position position="266"/>
    </location>
    <ligand>
        <name>substrate</name>
    </ligand>
</feature>
<feature type="binding site" evidence="1">
    <location>
        <position position="404"/>
    </location>
    <ligand>
        <name>substrate</name>
    </ligand>
</feature>
<feature type="sequence conflict" description="In Ref. 1; CAA52800." evidence="2" ref="1">
    <original>V</original>
    <variation>I</variation>
    <location>
        <position position="98"/>
    </location>
</feature>
<feature type="sequence conflict" description="In Ref. 1; CAA52800." evidence="2" ref="1">
    <original>H</original>
    <variation>N</variation>
    <location>
        <position position="114"/>
    </location>
</feature>
<feature type="sequence conflict" description="In Ref. 1; CAA52800." evidence="2" ref="1">
    <original>D</original>
    <variation>E</variation>
    <location>
        <position position="140"/>
    </location>
</feature>
<comment type="function">
    <text>The glycine cleavage system catalyzes the degradation of glycine.</text>
</comment>
<comment type="catalytic activity">
    <reaction>
        <text>N(6)-[(R)-S(8)-aminomethyldihydrolipoyl]-L-lysyl-[protein] + (6S)-5,6,7,8-tetrahydrofolate = N(6)-[(R)-dihydrolipoyl]-L-lysyl-[protein] + (6R)-5,10-methylene-5,6,7,8-tetrahydrofolate + NH4(+)</text>
        <dbReference type="Rhea" id="RHEA:16945"/>
        <dbReference type="Rhea" id="RHEA-COMP:10475"/>
        <dbReference type="Rhea" id="RHEA-COMP:10492"/>
        <dbReference type="ChEBI" id="CHEBI:15636"/>
        <dbReference type="ChEBI" id="CHEBI:28938"/>
        <dbReference type="ChEBI" id="CHEBI:57453"/>
        <dbReference type="ChEBI" id="CHEBI:83100"/>
        <dbReference type="ChEBI" id="CHEBI:83143"/>
        <dbReference type="EC" id="2.1.2.10"/>
    </reaction>
</comment>
<comment type="subunit">
    <text>The glycine cleavage system is composed of four proteins: P, T, L and H.</text>
</comment>
<comment type="subcellular location">
    <subcellularLocation>
        <location>Mitochondrion</location>
    </subcellularLocation>
</comment>
<comment type="similarity">
    <text evidence="2">Belongs to the GcvT family.</text>
</comment>
<evidence type="ECO:0000250" key="1"/>
<evidence type="ECO:0000305" key="2"/>
<organism>
    <name type="scientific">Pisum sativum</name>
    <name type="common">Garden pea</name>
    <name type="synonym">Lathyrus oleraceus</name>
    <dbReference type="NCBI Taxonomy" id="3888"/>
    <lineage>
        <taxon>Eukaryota</taxon>
        <taxon>Viridiplantae</taxon>
        <taxon>Streptophyta</taxon>
        <taxon>Embryophyta</taxon>
        <taxon>Tracheophyta</taxon>
        <taxon>Spermatophyta</taxon>
        <taxon>Magnoliopsida</taxon>
        <taxon>eudicotyledons</taxon>
        <taxon>Gunneridae</taxon>
        <taxon>Pentapetalae</taxon>
        <taxon>rosids</taxon>
        <taxon>fabids</taxon>
        <taxon>Fabales</taxon>
        <taxon>Fabaceae</taxon>
        <taxon>Papilionoideae</taxon>
        <taxon>50 kb inversion clade</taxon>
        <taxon>NPAAA clade</taxon>
        <taxon>Hologalegina</taxon>
        <taxon>IRL clade</taxon>
        <taxon>Fabeae</taxon>
        <taxon>Pisum</taxon>
    </lineage>
</organism>
<reference key="1">
    <citation type="journal article" date="1993" name="Eur. J. Biochem.">
        <title>Glycine decarboxylase complex from higher plants. Molecular cloning, tissue distribution and mass spectrometry analyses of the T protein.</title>
        <authorList>
            <person name="Bourguignon J."/>
            <person name="Vauclare P."/>
            <person name="Merand V."/>
            <person name="Forest E."/>
            <person name="Neuburger M."/>
            <person name="Douce R."/>
        </authorList>
    </citation>
    <scope>NUCLEOTIDE SEQUENCE [MRNA]</scope>
    <scope>PARTIAL PROTEIN SEQUENCE</scope>
    <source>
        <tissue>Leaf</tissue>
    </source>
</reference>
<reference key="2">
    <citation type="journal article" date="1995" name="Plant Mol. Biol.">
        <title>T-protein of the glycine decarboxylase multienzyme complex: evidence for partial similarity to formyltetrahydrofolate synthetase.</title>
        <authorList>
            <person name="Kopriva S."/>
            <person name="Turner S.R."/>
            <person name="Rawsthorne S."/>
            <person name="Bauwe H."/>
        </authorList>
    </citation>
    <scope>NUCLEOTIDE SEQUENCE [MRNA]</scope>
    <source>
        <tissue>Leaf</tissue>
    </source>
</reference>
<reference key="3">
    <citation type="journal article" date="1998" name="Plant Mol. Biol.">
        <title>The gene encoding T protein of the glycine decarboxylase complex involved in the mitochondrial step of the photorespiratory pathway in plants exhibits features of light-induced genes.</title>
        <authorList>
            <person name="Vauclare P."/>
            <person name="Macherel D."/>
            <person name="Douce R."/>
            <person name="Bourguignon J."/>
        </authorList>
    </citation>
    <scope>NUCLEOTIDE SEQUENCE [GENOMIC DNA]</scope>
</reference>
<sequence length="408" mass="44285">MRGGLWQLGQSITRRLANGGDKKAVARRCFATESELKKTVLYDFHVAHGGKMVPFAGWSMPIQYKDSIMDSTLNCRQNGSLFDVSHMCGLSLKGKDVVSFLEKLVIADVAALAHGTGTLTVFTNEKGGAIDDSVITKVTDDHLYLVVNAGCRDKDLAHIEEHMKAFKAKGGDVSWHIHDERSLLALQGPLAAPVLQHLTKEDLSKLYFGEFRVLDINGSQCFLTRTGYTGEDGFEISVPSEHGVELAKALLEKSEGKIRLTGLGARDSLRLEAGLCLYGNDLEQHITPIEAGLTWAIGKRRRAEGGFLGADVILKQLADGPSIRRVGFISSGPPPRSHSEIQDEGGNNIGEVTSGGFSPCLKKNIAIGYVKSGLHKAGTKVKIIIRGKQNEGVVTKMPFVPTKYYKPS</sequence>
<proteinExistence type="evidence at protein level"/>
<name>GCST_PEA</name>
<protein>
    <recommendedName>
        <fullName>Aminomethyltransferase, mitochondrial</fullName>
        <ecNumber>2.1.2.10</ecNumber>
    </recommendedName>
    <alternativeName>
        <fullName>Glycine cleavage system T protein</fullName>
        <shortName>GCVT</shortName>
    </alternativeName>
</protein>
<dbReference type="EC" id="2.1.2.10"/>
<dbReference type="EMBL" id="X74793">
    <property type="protein sequence ID" value="CAA52800.1"/>
    <property type="molecule type" value="mRNA"/>
</dbReference>
<dbReference type="EMBL" id="Z25861">
    <property type="protein sequence ID" value="CAA81080.1"/>
    <property type="molecule type" value="mRNA"/>
</dbReference>
<dbReference type="EMBL" id="AJ222771">
    <property type="protein sequence ID" value="CAA10976.1"/>
    <property type="molecule type" value="Genomic_DNA"/>
</dbReference>
<dbReference type="PIR" id="S38370">
    <property type="entry name" value="S38370"/>
</dbReference>
<dbReference type="PIR" id="S56661">
    <property type="entry name" value="S56661"/>
</dbReference>
<dbReference type="SMR" id="P49364"/>
<dbReference type="IntAct" id="P49364">
    <property type="interactions" value="1"/>
</dbReference>
<dbReference type="OrthoDB" id="10263536at2759"/>
<dbReference type="BRENDA" id="1.4.1.27">
    <property type="organism ID" value="4872"/>
</dbReference>
<dbReference type="SABIO-RK" id="P49364"/>
<dbReference type="GO" id="GO:0005960">
    <property type="term" value="C:glycine cleavage complex"/>
    <property type="evidence" value="ECO:0000314"/>
    <property type="project" value="UniProtKB"/>
</dbReference>
<dbReference type="GO" id="GO:0005759">
    <property type="term" value="C:mitochondrial matrix"/>
    <property type="evidence" value="ECO:0000314"/>
    <property type="project" value="FlyBase"/>
</dbReference>
<dbReference type="GO" id="GO:0004047">
    <property type="term" value="F:aminomethyltransferase activity"/>
    <property type="evidence" value="ECO:0000314"/>
    <property type="project" value="FlyBase"/>
</dbReference>
<dbReference type="GO" id="GO:0008483">
    <property type="term" value="F:transaminase activity"/>
    <property type="evidence" value="ECO:0007669"/>
    <property type="project" value="UniProtKB-KW"/>
</dbReference>
<dbReference type="GO" id="GO:0019464">
    <property type="term" value="P:glycine decarboxylation via glycine cleavage system"/>
    <property type="evidence" value="ECO:0000314"/>
    <property type="project" value="FlyBase"/>
</dbReference>
<dbReference type="FunFam" id="2.40.30.110:FF:000002">
    <property type="entry name" value="Aminomethyltransferase"/>
    <property type="match status" value="1"/>
</dbReference>
<dbReference type="FunFam" id="3.30.1360.120:FF:000014">
    <property type="entry name" value="Aminomethyltransferase"/>
    <property type="match status" value="1"/>
</dbReference>
<dbReference type="FunFam" id="3.30.70.1400:FF:000001">
    <property type="entry name" value="Aminomethyltransferase"/>
    <property type="match status" value="1"/>
</dbReference>
<dbReference type="FunFam" id="4.10.1250.10:FF:000002">
    <property type="entry name" value="Aminomethyltransferase"/>
    <property type="match status" value="1"/>
</dbReference>
<dbReference type="Gene3D" id="2.40.30.110">
    <property type="entry name" value="Aminomethyltransferase beta-barrel domains"/>
    <property type="match status" value="1"/>
</dbReference>
<dbReference type="Gene3D" id="3.30.70.1400">
    <property type="entry name" value="Aminomethyltransferase beta-barrel domains"/>
    <property type="match status" value="1"/>
</dbReference>
<dbReference type="Gene3D" id="4.10.1250.10">
    <property type="entry name" value="Aminomethyltransferase fragment"/>
    <property type="match status" value="1"/>
</dbReference>
<dbReference type="Gene3D" id="3.30.1360.120">
    <property type="entry name" value="Probable tRNA modification gtpase trme, domain 1"/>
    <property type="match status" value="1"/>
</dbReference>
<dbReference type="InterPro" id="IPR006223">
    <property type="entry name" value="GCS_T"/>
</dbReference>
<dbReference type="InterPro" id="IPR013977">
    <property type="entry name" value="GCST_C"/>
</dbReference>
<dbReference type="InterPro" id="IPR006222">
    <property type="entry name" value="GCV_T_N"/>
</dbReference>
<dbReference type="InterPro" id="IPR028896">
    <property type="entry name" value="GcvT/YgfZ/DmdA"/>
</dbReference>
<dbReference type="InterPro" id="IPR029043">
    <property type="entry name" value="GcvT/YgfZ_C"/>
</dbReference>
<dbReference type="InterPro" id="IPR027266">
    <property type="entry name" value="TrmE/GcvT_dom1"/>
</dbReference>
<dbReference type="NCBIfam" id="TIGR00528">
    <property type="entry name" value="gcvT"/>
    <property type="match status" value="1"/>
</dbReference>
<dbReference type="NCBIfam" id="NF001567">
    <property type="entry name" value="PRK00389.1"/>
    <property type="match status" value="1"/>
</dbReference>
<dbReference type="PANTHER" id="PTHR43757">
    <property type="entry name" value="AMINOMETHYLTRANSFERASE"/>
    <property type="match status" value="1"/>
</dbReference>
<dbReference type="PANTHER" id="PTHR43757:SF2">
    <property type="entry name" value="AMINOMETHYLTRANSFERASE, MITOCHONDRIAL"/>
    <property type="match status" value="1"/>
</dbReference>
<dbReference type="Pfam" id="PF01571">
    <property type="entry name" value="GCV_T"/>
    <property type="match status" value="1"/>
</dbReference>
<dbReference type="Pfam" id="PF08669">
    <property type="entry name" value="GCV_T_C"/>
    <property type="match status" value="1"/>
</dbReference>
<dbReference type="PIRSF" id="PIRSF006487">
    <property type="entry name" value="GcvT"/>
    <property type="match status" value="1"/>
</dbReference>
<dbReference type="SUPFAM" id="SSF101790">
    <property type="entry name" value="Aminomethyltransferase beta-barrel domain"/>
    <property type="match status" value="1"/>
</dbReference>
<dbReference type="SUPFAM" id="SSF103025">
    <property type="entry name" value="Folate-binding domain"/>
    <property type="match status" value="1"/>
</dbReference>
<accession>P49364</accession>
<gene>
    <name type="primary">GDCST</name>
    <name type="synonym">GDCT</name>
</gene>
<keyword id="KW-0032">Aminotransferase</keyword>
<keyword id="KW-0903">Direct protein sequencing</keyword>
<keyword id="KW-0496">Mitochondrion</keyword>
<keyword id="KW-0808">Transferase</keyword>
<keyword id="KW-0809">Transit peptide</keyword>